<comment type="function">
    <text evidence="1">Ligates lysine onto the cytidine present at position 34 of the AUA codon-specific tRNA(Ile) that contains the anticodon CAU, in an ATP-dependent manner. Cytidine is converted to lysidine, thus changing the amino acid specificity of the tRNA from methionine to isoleucine.</text>
</comment>
<comment type="catalytic activity">
    <reaction evidence="1">
        <text>cytidine(34) in tRNA(Ile2) + L-lysine + ATP = lysidine(34) in tRNA(Ile2) + AMP + diphosphate + H(+)</text>
        <dbReference type="Rhea" id="RHEA:43744"/>
        <dbReference type="Rhea" id="RHEA-COMP:10625"/>
        <dbReference type="Rhea" id="RHEA-COMP:10670"/>
        <dbReference type="ChEBI" id="CHEBI:15378"/>
        <dbReference type="ChEBI" id="CHEBI:30616"/>
        <dbReference type="ChEBI" id="CHEBI:32551"/>
        <dbReference type="ChEBI" id="CHEBI:33019"/>
        <dbReference type="ChEBI" id="CHEBI:82748"/>
        <dbReference type="ChEBI" id="CHEBI:83665"/>
        <dbReference type="ChEBI" id="CHEBI:456215"/>
        <dbReference type="EC" id="6.3.4.19"/>
    </reaction>
</comment>
<comment type="subcellular location">
    <subcellularLocation>
        <location evidence="1">Cytoplasm</location>
    </subcellularLocation>
</comment>
<comment type="domain">
    <text>The N-terminal region contains the highly conserved SGGXDS motif, predicted to be a P-loop motif involved in ATP binding.</text>
</comment>
<comment type="similarity">
    <text evidence="1">Belongs to the tRNA(Ile)-lysidine synthase family.</text>
</comment>
<name>TILS_MYCLE</name>
<organism>
    <name type="scientific">Mycobacterium leprae (strain TN)</name>
    <dbReference type="NCBI Taxonomy" id="272631"/>
    <lineage>
        <taxon>Bacteria</taxon>
        <taxon>Bacillati</taxon>
        <taxon>Actinomycetota</taxon>
        <taxon>Actinomycetes</taxon>
        <taxon>Mycobacteriales</taxon>
        <taxon>Mycobacteriaceae</taxon>
        <taxon>Mycobacterium</taxon>
    </lineage>
</organism>
<reference key="1">
    <citation type="journal article" date="2001" name="Nature">
        <title>Massive gene decay in the leprosy bacillus.</title>
        <authorList>
            <person name="Cole S.T."/>
            <person name="Eiglmeier K."/>
            <person name="Parkhill J."/>
            <person name="James K.D."/>
            <person name="Thomson N.R."/>
            <person name="Wheeler P.R."/>
            <person name="Honore N."/>
            <person name="Garnier T."/>
            <person name="Churcher C.M."/>
            <person name="Harris D.E."/>
            <person name="Mungall K.L."/>
            <person name="Basham D."/>
            <person name="Brown D."/>
            <person name="Chillingworth T."/>
            <person name="Connor R."/>
            <person name="Davies R.M."/>
            <person name="Devlin K."/>
            <person name="Duthoy S."/>
            <person name="Feltwell T."/>
            <person name="Fraser A."/>
            <person name="Hamlin N."/>
            <person name="Holroyd S."/>
            <person name="Hornsby T."/>
            <person name="Jagels K."/>
            <person name="Lacroix C."/>
            <person name="Maclean J."/>
            <person name="Moule S."/>
            <person name="Murphy L.D."/>
            <person name="Oliver K."/>
            <person name="Quail M.A."/>
            <person name="Rajandream M.A."/>
            <person name="Rutherford K.M."/>
            <person name="Rutter S."/>
            <person name="Seeger K."/>
            <person name="Simon S."/>
            <person name="Simmonds M."/>
            <person name="Skelton J."/>
            <person name="Squares R."/>
            <person name="Squares S."/>
            <person name="Stevens K."/>
            <person name="Taylor K."/>
            <person name="Whitehead S."/>
            <person name="Woodward J.R."/>
            <person name="Barrell B.G."/>
        </authorList>
    </citation>
    <scope>NUCLEOTIDE SEQUENCE [LARGE SCALE GENOMIC DNA]</scope>
    <source>
        <strain>TN</strain>
    </source>
</reference>
<keyword id="KW-0067">ATP-binding</keyword>
<keyword id="KW-0963">Cytoplasm</keyword>
<keyword id="KW-0436">Ligase</keyword>
<keyword id="KW-0547">Nucleotide-binding</keyword>
<keyword id="KW-1185">Reference proteome</keyword>
<keyword id="KW-0819">tRNA processing</keyword>
<feature type="chain" id="PRO_0000181723" description="tRNA(Ile)-lysidine synthase">
    <location>
        <begin position="1"/>
        <end position="323"/>
    </location>
</feature>
<feature type="binding site" evidence="1">
    <location>
        <begin position="33"/>
        <end position="38"/>
    </location>
    <ligand>
        <name>ATP</name>
        <dbReference type="ChEBI" id="CHEBI:30616"/>
    </ligand>
</feature>
<sequence>MDRQGAVGQLRRTVEEFAGTYCDIDDQWCVALSGGSDSLALTAVAAQLRSTTAFIVDHGLQSDSAAVAETARKQAISLGCVDAQVLCVQIDPPFGPKGGLEAAARAARYAVLGANRNGPVLLAHTLDDQAETVLLGLGRGSGARSIAGMRPHDPPWCRPLLGVRRSVPRAACHELGLNAWQDPHNTDCRYTRTRLRLEVLPLLEDVLGGGVVEALARTATALREDTELIDTFAAQALPNICAGSGLHARALAALPDAVRRRVIRGWLLNGGATGLTDKQIRGVDTLVTAWRGQGGVAVGSTLRGQRLIASRYDGVLTLHCAPV</sequence>
<dbReference type="EC" id="6.3.4.19" evidence="1"/>
<dbReference type="EMBL" id="AL023093">
    <property type="protein sequence ID" value="CAA18805.1"/>
    <property type="molecule type" value="Genomic_DNA"/>
</dbReference>
<dbReference type="EMBL" id="AL583917">
    <property type="protein sequence ID" value="CAC29721.1"/>
    <property type="molecule type" value="Genomic_DNA"/>
</dbReference>
<dbReference type="PIR" id="E86935">
    <property type="entry name" value="E86935"/>
</dbReference>
<dbReference type="RefSeq" id="NP_301278.1">
    <property type="nucleotide sequence ID" value="NC_002677.1"/>
</dbReference>
<dbReference type="RefSeq" id="WP_010907602.1">
    <property type="nucleotide sequence ID" value="NC_002677.1"/>
</dbReference>
<dbReference type="SMR" id="O69538"/>
<dbReference type="STRING" id="272631.gene:17574030"/>
<dbReference type="KEGG" id="mle:ML0213"/>
<dbReference type="PATRIC" id="fig|272631.5.peg.339"/>
<dbReference type="Leproma" id="ML0213"/>
<dbReference type="eggNOG" id="COG0037">
    <property type="taxonomic scope" value="Bacteria"/>
</dbReference>
<dbReference type="HOGENOM" id="CLU_018869_1_1_11"/>
<dbReference type="OrthoDB" id="5244702at2"/>
<dbReference type="Proteomes" id="UP000000806">
    <property type="component" value="Chromosome"/>
</dbReference>
<dbReference type="GO" id="GO:0005737">
    <property type="term" value="C:cytoplasm"/>
    <property type="evidence" value="ECO:0007669"/>
    <property type="project" value="UniProtKB-SubCell"/>
</dbReference>
<dbReference type="GO" id="GO:0005524">
    <property type="term" value="F:ATP binding"/>
    <property type="evidence" value="ECO:0007669"/>
    <property type="project" value="UniProtKB-UniRule"/>
</dbReference>
<dbReference type="GO" id="GO:0032267">
    <property type="term" value="F:tRNA(Ile)-lysidine synthase activity"/>
    <property type="evidence" value="ECO:0007669"/>
    <property type="project" value="UniProtKB-EC"/>
</dbReference>
<dbReference type="GO" id="GO:0006400">
    <property type="term" value="P:tRNA modification"/>
    <property type="evidence" value="ECO:0007669"/>
    <property type="project" value="UniProtKB-UniRule"/>
</dbReference>
<dbReference type="CDD" id="cd01992">
    <property type="entry name" value="TilS_N"/>
    <property type="match status" value="1"/>
</dbReference>
<dbReference type="Gene3D" id="1.20.59.20">
    <property type="match status" value="1"/>
</dbReference>
<dbReference type="Gene3D" id="3.40.50.620">
    <property type="entry name" value="HUPs"/>
    <property type="match status" value="1"/>
</dbReference>
<dbReference type="HAMAP" id="MF_01161">
    <property type="entry name" value="tRNA_Ile_lys_synt"/>
    <property type="match status" value="1"/>
</dbReference>
<dbReference type="InterPro" id="IPR014729">
    <property type="entry name" value="Rossmann-like_a/b/a_fold"/>
</dbReference>
<dbReference type="InterPro" id="IPR011063">
    <property type="entry name" value="TilS/TtcA_N"/>
</dbReference>
<dbReference type="InterPro" id="IPR012094">
    <property type="entry name" value="tRNA_Ile_lys_synt"/>
</dbReference>
<dbReference type="InterPro" id="IPR012795">
    <property type="entry name" value="tRNA_Ile_lys_synt_N"/>
</dbReference>
<dbReference type="InterPro" id="IPR015262">
    <property type="entry name" value="tRNA_Ile_lys_synt_subst-bd"/>
</dbReference>
<dbReference type="NCBIfam" id="TIGR02432">
    <property type="entry name" value="lysidine_TilS_N"/>
    <property type="match status" value="1"/>
</dbReference>
<dbReference type="PANTHER" id="PTHR43033">
    <property type="entry name" value="TRNA(ILE)-LYSIDINE SYNTHASE-RELATED"/>
    <property type="match status" value="1"/>
</dbReference>
<dbReference type="PANTHER" id="PTHR43033:SF1">
    <property type="entry name" value="TRNA(ILE)-LYSIDINE SYNTHASE-RELATED"/>
    <property type="match status" value="1"/>
</dbReference>
<dbReference type="Pfam" id="PF01171">
    <property type="entry name" value="ATP_bind_3"/>
    <property type="match status" value="1"/>
</dbReference>
<dbReference type="Pfam" id="PF09179">
    <property type="entry name" value="TilS"/>
    <property type="match status" value="1"/>
</dbReference>
<dbReference type="SUPFAM" id="SSF52402">
    <property type="entry name" value="Adenine nucleotide alpha hydrolases-like"/>
    <property type="match status" value="1"/>
</dbReference>
<dbReference type="SUPFAM" id="SSF82829">
    <property type="entry name" value="MesJ substrate recognition domain-like"/>
    <property type="match status" value="1"/>
</dbReference>
<protein>
    <recommendedName>
        <fullName evidence="1">tRNA(Ile)-lysidine synthase</fullName>
        <ecNumber evidence="1">6.3.4.19</ecNumber>
    </recommendedName>
    <alternativeName>
        <fullName evidence="1">tRNA(Ile)-2-lysyl-cytidine synthase</fullName>
    </alternativeName>
    <alternativeName>
        <fullName evidence="1">tRNA(Ile)-lysidine synthetase</fullName>
    </alternativeName>
</protein>
<proteinExistence type="inferred from homology"/>
<gene>
    <name evidence="1" type="primary">tilS</name>
    <name type="ordered locus">ML0213</name>
    <name type="ORF">MLCB2548.18c</name>
</gene>
<evidence type="ECO:0000255" key="1">
    <source>
        <dbReference type="HAMAP-Rule" id="MF_01161"/>
    </source>
</evidence>
<accession>O69538</accession>